<comment type="function">
    <text evidence="1">GTPase that associates with the 50S ribosomal subunit and may have a role during protein synthesis or ribosome biogenesis.</text>
</comment>
<comment type="cofactor">
    <cofactor evidence="1">
        <name>Mg(2+)</name>
        <dbReference type="ChEBI" id="CHEBI:18420"/>
    </cofactor>
</comment>
<comment type="subunit">
    <text evidence="1">Monomer. Associates with the 50S ribosomal subunit.</text>
</comment>
<comment type="subcellular location">
    <subcellularLocation>
        <location evidence="1">Cytoplasm</location>
    </subcellularLocation>
    <text evidence="1">May associate with membranes.</text>
</comment>
<comment type="similarity">
    <text evidence="1">Belongs to the TRAFAC class OBG-HflX-like GTPase superfamily. HflX GTPase family.</text>
</comment>
<comment type="sequence caution" evidence="2">
    <conflict type="erroneous initiation">
        <sequence resource="EMBL-CDS" id="ABJ77257"/>
    </conflict>
    <text>Extended N-terminus.</text>
</comment>
<dbReference type="EMBL" id="CP000350">
    <property type="protein sequence ID" value="ABJ77257.1"/>
    <property type="status" value="ALT_INIT"/>
    <property type="molecule type" value="Genomic_DNA"/>
</dbReference>
<dbReference type="SMR" id="Q04PB3"/>
<dbReference type="KEGG" id="lbj:LBJ_2854"/>
<dbReference type="HOGENOM" id="CLU_019597_7_1_12"/>
<dbReference type="Proteomes" id="UP000000656">
    <property type="component" value="Chromosome 1"/>
</dbReference>
<dbReference type="GO" id="GO:0005737">
    <property type="term" value="C:cytoplasm"/>
    <property type="evidence" value="ECO:0007669"/>
    <property type="project" value="UniProtKB-SubCell"/>
</dbReference>
<dbReference type="GO" id="GO:0005525">
    <property type="term" value="F:GTP binding"/>
    <property type="evidence" value="ECO:0007669"/>
    <property type="project" value="UniProtKB-UniRule"/>
</dbReference>
<dbReference type="GO" id="GO:0003924">
    <property type="term" value="F:GTPase activity"/>
    <property type="evidence" value="ECO:0007669"/>
    <property type="project" value="UniProtKB-UniRule"/>
</dbReference>
<dbReference type="GO" id="GO:0046872">
    <property type="term" value="F:metal ion binding"/>
    <property type="evidence" value="ECO:0007669"/>
    <property type="project" value="UniProtKB-KW"/>
</dbReference>
<dbReference type="GO" id="GO:0043022">
    <property type="term" value="F:ribosome binding"/>
    <property type="evidence" value="ECO:0007669"/>
    <property type="project" value="TreeGrafter"/>
</dbReference>
<dbReference type="CDD" id="cd01878">
    <property type="entry name" value="HflX"/>
    <property type="match status" value="1"/>
</dbReference>
<dbReference type="FunFam" id="3.40.50.11060:FF:000001">
    <property type="entry name" value="GTPase HflX"/>
    <property type="match status" value="1"/>
</dbReference>
<dbReference type="FunFam" id="3.40.50.300:FF:002369">
    <property type="entry name" value="GTPase HflX"/>
    <property type="match status" value="1"/>
</dbReference>
<dbReference type="Gene3D" id="6.10.250.2860">
    <property type="match status" value="1"/>
</dbReference>
<dbReference type="Gene3D" id="3.40.50.11060">
    <property type="entry name" value="GTPase HflX, N-terminal domain"/>
    <property type="match status" value="1"/>
</dbReference>
<dbReference type="Gene3D" id="3.40.50.300">
    <property type="entry name" value="P-loop containing nucleotide triphosphate hydrolases"/>
    <property type="match status" value="1"/>
</dbReference>
<dbReference type="HAMAP" id="MF_00900">
    <property type="entry name" value="GTPase_HflX"/>
    <property type="match status" value="1"/>
</dbReference>
<dbReference type="InterPro" id="IPR030394">
    <property type="entry name" value="G_HFLX_dom"/>
</dbReference>
<dbReference type="InterPro" id="IPR006073">
    <property type="entry name" value="GTP-bd"/>
</dbReference>
<dbReference type="InterPro" id="IPR032305">
    <property type="entry name" value="GTP-bd_M"/>
</dbReference>
<dbReference type="InterPro" id="IPR016496">
    <property type="entry name" value="GTPase_HflX"/>
</dbReference>
<dbReference type="InterPro" id="IPR025121">
    <property type="entry name" value="GTPase_HflX_N"/>
</dbReference>
<dbReference type="InterPro" id="IPR042108">
    <property type="entry name" value="GTPase_HflX_N_sf"/>
</dbReference>
<dbReference type="InterPro" id="IPR027417">
    <property type="entry name" value="P-loop_NTPase"/>
</dbReference>
<dbReference type="InterPro" id="IPR005225">
    <property type="entry name" value="Small_GTP-bd"/>
</dbReference>
<dbReference type="NCBIfam" id="TIGR03156">
    <property type="entry name" value="GTP_HflX"/>
    <property type="match status" value="1"/>
</dbReference>
<dbReference type="NCBIfam" id="TIGR00231">
    <property type="entry name" value="small_GTP"/>
    <property type="match status" value="1"/>
</dbReference>
<dbReference type="PANTHER" id="PTHR10229:SF0">
    <property type="entry name" value="GTP-BINDING PROTEIN 6-RELATED"/>
    <property type="match status" value="1"/>
</dbReference>
<dbReference type="PANTHER" id="PTHR10229">
    <property type="entry name" value="GTP-BINDING PROTEIN HFLX"/>
    <property type="match status" value="1"/>
</dbReference>
<dbReference type="Pfam" id="PF16360">
    <property type="entry name" value="GTP-bdg_M"/>
    <property type="match status" value="1"/>
</dbReference>
<dbReference type="Pfam" id="PF13167">
    <property type="entry name" value="GTP-bdg_N"/>
    <property type="match status" value="1"/>
</dbReference>
<dbReference type="Pfam" id="PF01926">
    <property type="entry name" value="MMR_HSR1"/>
    <property type="match status" value="1"/>
</dbReference>
<dbReference type="PRINTS" id="PR00326">
    <property type="entry name" value="GTP1OBG"/>
</dbReference>
<dbReference type="SUPFAM" id="SSF52540">
    <property type="entry name" value="P-loop containing nucleoside triphosphate hydrolases"/>
    <property type="match status" value="1"/>
</dbReference>
<dbReference type="PROSITE" id="PS51705">
    <property type="entry name" value="G_HFLX"/>
    <property type="match status" value="1"/>
</dbReference>
<accession>Q04PB3</accession>
<organism>
    <name type="scientific">Leptospira borgpetersenii serovar Hardjo-bovis (strain JB197)</name>
    <dbReference type="NCBI Taxonomy" id="355277"/>
    <lineage>
        <taxon>Bacteria</taxon>
        <taxon>Pseudomonadati</taxon>
        <taxon>Spirochaetota</taxon>
        <taxon>Spirochaetia</taxon>
        <taxon>Leptospirales</taxon>
        <taxon>Leptospiraceae</taxon>
        <taxon>Leptospira</taxon>
    </lineage>
</organism>
<name>HFLX_LEPBJ</name>
<sequence length="462" mass="52425">MDTSGNPNGYYSAHLNPESDDLWSVLPKKYPGQLTEGILEEILEIESRLSRSKKNLKDAQKENRAFLVGVYPERSVGRHPSLSMEELKELCRTAEVHVVDTFIQRKNRLDPSTVLGKGKLEEIILKAIQKHVELLVFDLELTPSQAKKISDIADIKVIDRTQLILDIFARNAKSRDGKLQVELAQLKYLKGRLTELDDNMSRLTGGIGGRGPGETKLEIGKRRVEERITRLEVELKSLKKRREINRRQRKRNELPAVGIVGYTNAGKSTFLNALTNSEILSENKLFATLDPTTRRIRFPEEREIIISDTVGFIHDLPPELSNAFKATLEELGDSDLLVHVVDVSNPDYKLQMEAVEKILEELELSHIPMIQVFNKIDNLEKFKTWKIESDSNGYKTFSHPSINHGPGLEAIADLKEELGIDVHSDTVLVSAYQGWGLKAFLDLLEEKIYNLPRLNYSIAEKL</sequence>
<gene>
    <name evidence="1" type="primary">hflX</name>
    <name type="ordered locus">LBJ_2854</name>
</gene>
<evidence type="ECO:0000255" key="1">
    <source>
        <dbReference type="HAMAP-Rule" id="MF_00900"/>
    </source>
</evidence>
<evidence type="ECO:0000305" key="2"/>
<protein>
    <recommendedName>
        <fullName evidence="1">GTPase HflX</fullName>
    </recommendedName>
    <alternativeName>
        <fullName evidence="1">GTP-binding protein HflX</fullName>
    </alternativeName>
</protein>
<keyword id="KW-0963">Cytoplasm</keyword>
<keyword id="KW-0342">GTP-binding</keyword>
<keyword id="KW-0460">Magnesium</keyword>
<keyword id="KW-0479">Metal-binding</keyword>
<keyword id="KW-0547">Nucleotide-binding</keyword>
<feature type="chain" id="PRO_0000412660" description="GTPase HflX">
    <location>
        <begin position="1"/>
        <end position="462"/>
    </location>
</feature>
<feature type="domain" description="Hflx-type G" evidence="1">
    <location>
        <begin position="255"/>
        <end position="452"/>
    </location>
</feature>
<feature type="binding site" evidence="1">
    <location>
        <begin position="261"/>
        <end position="268"/>
    </location>
    <ligand>
        <name>GTP</name>
        <dbReference type="ChEBI" id="CHEBI:37565"/>
    </ligand>
</feature>
<feature type="binding site" evidence="1">
    <location>
        <position position="268"/>
    </location>
    <ligand>
        <name>Mg(2+)</name>
        <dbReference type="ChEBI" id="CHEBI:18420"/>
    </ligand>
</feature>
<feature type="binding site" evidence="1">
    <location>
        <begin position="286"/>
        <end position="290"/>
    </location>
    <ligand>
        <name>GTP</name>
        <dbReference type="ChEBI" id="CHEBI:37565"/>
    </ligand>
</feature>
<feature type="binding site" evidence="1">
    <location>
        <position position="288"/>
    </location>
    <ligand>
        <name>Mg(2+)</name>
        <dbReference type="ChEBI" id="CHEBI:18420"/>
    </ligand>
</feature>
<feature type="binding site" evidence="1">
    <location>
        <begin position="308"/>
        <end position="311"/>
    </location>
    <ligand>
        <name>GTP</name>
        <dbReference type="ChEBI" id="CHEBI:37565"/>
    </ligand>
</feature>
<feature type="binding site" evidence="1">
    <location>
        <begin position="374"/>
        <end position="377"/>
    </location>
    <ligand>
        <name>GTP</name>
        <dbReference type="ChEBI" id="CHEBI:37565"/>
    </ligand>
</feature>
<feature type="binding site" evidence="1">
    <location>
        <begin position="430"/>
        <end position="432"/>
    </location>
    <ligand>
        <name>GTP</name>
        <dbReference type="ChEBI" id="CHEBI:37565"/>
    </ligand>
</feature>
<reference key="1">
    <citation type="journal article" date="2006" name="Proc. Natl. Acad. Sci. U.S.A.">
        <title>Genome reduction in Leptospira borgpetersenii reflects limited transmission potential.</title>
        <authorList>
            <person name="Bulach D.M."/>
            <person name="Zuerner R.L."/>
            <person name="Wilson P."/>
            <person name="Seemann T."/>
            <person name="McGrath A."/>
            <person name="Cullen P.A."/>
            <person name="Davis J."/>
            <person name="Johnson M."/>
            <person name="Kuczek E."/>
            <person name="Alt D.P."/>
            <person name="Peterson-Burch B."/>
            <person name="Coppel R.L."/>
            <person name="Rood J.I."/>
            <person name="Davies J.K."/>
            <person name="Adler B."/>
        </authorList>
    </citation>
    <scope>NUCLEOTIDE SEQUENCE [LARGE SCALE GENOMIC DNA]</scope>
    <source>
        <strain>JB197</strain>
    </source>
</reference>
<proteinExistence type="inferred from homology"/>